<feature type="chain" id="PRO_0000163232" description="RNA-binding protein KhpA">
    <location>
        <begin position="1"/>
        <end position="80"/>
    </location>
</feature>
<feature type="domain" description="KH" evidence="1">
    <location>
        <begin position="33"/>
        <end position="80"/>
    </location>
</feature>
<reference key="1">
    <citation type="journal article" date="2003" name="Proc. Natl. Acad. Sci. U.S.A.">
        <title>The complete genome sequence of Mycobacterium bovis.</title>
        <authorList>
            <person name="Garnier T."/>
            <person name="Eiglmeier K."/>
            <person name="Camus J.-C."/>
            <person name="Medina N."/>
            <person name="Mansoor H."/>
            <person name="Pryor M."/>
            <person name="Duthoy S."/>
            <person name="Grondin S."/>
            <person name="Lacroix C."/>
            <person name="Monsempe C."/>
            <person name="Simon S."/>
            <person name="Harris B."/>
            <person name="Atkin R."/>
            <person name="Doggett J."/>
            <person name="Mayes R."/>
            <person name="Keating L."/>
            <person name="Wheeler P.R."/>
            <person name="Parkhill J."/>
            <person name="Barrell B.G."/>
            <person name="Cole S.T."/>
            <person name="Gordon S.V."/>
            <person name="Hewinson R.G."/>
        </authorList>
    </citation>
    <scope>NUCLEOTIDE SEQUENCE [LARGE SCALE GENOMIC DNA]</scope>
    <source>
        <strain>ATCC BAA-935 / AF2122/97</strain>
    </source>
</reference>
<reference key="2">
    <citation type="journal article" date="2017" name="Genome Announc.">
        <title>Updated reference genome sequence and annotation of Mycobacterium bovis AF2122/97.</title>
        <authorList>
            <person name="Malone K.M."/>
            <person name="Farrell D."/>
            <person name="Stuber T.P."/>
            <person name="Schubert O.T."/>
            <person name="Aebersold R."/>
            <person name="Robbe-Austerman S."/>
            <person name="Gordon S.V."/>
        </authorList>
    </citation>
    <scope>NUCLEOTIDE SEQUENCE [LARGE SCALE GENOMIC DNA]</scope>
    <scope>GENOME REANNOTATION</scope>
    <source>
        <strain>ATCC BAA-935 / AF2122/97</strain>
    </source>
</reference>
<accession>P67237</accession>
<accession>A0A1R3Y2K3</accession>
<accession>Q10826</accession>
<accession>X2BLZ3</accession>
<sequence>MSAVVVDAVEHLVRGIVDNPDDVRVDLITSRRGRTVEVHVHPDDLGKVIGRGGRTATALRTLVAGIGGRGIRVDVVDTDQ</sequence>
<organism>
    <name type="scientific">Mycobacterium bovis (strain ATCC BAA-935 / AF2122/97)</name>
    <dbReference type="NCBI Taxonomy" id="233413"/>
    <lineage>
        <taxon>Bacteria</taxon>
        <taxon>Bacillati</taxon>
        <taxon>Actinomycetota</taxon>
        <taxon>Actinomycetes</taxon>
        <taxon>Mycobacteriales</taxon>
        <taxon>Mycobacteriaceae</taxon>
        <taxon>Mycobacterium</taxon>
        <taxon>Mycobacterium tuberculosis complex</taxon>
    </lineage>
</organism>
<dbReference type="EMBL" id="LT708304">
    <property type="protein sequence ID" value="SIU01553.1"/>
    <property type="molecule type" value="Genomic_DNA"/>
</dbReference>
<dbReference type="RefSeq" id="NP_856577.1">
    <property type="nucleotide sequence ID" value="NC_002945.3"/>
</dbReference>
<dbReference type="RefSeq" id="WP_003414728.1">
    <property type="nucleotide sequence ID" value="NC_002945.4"/>
</dbReference>
<dbReference type="SMR" id="P67237"/>
<dbReference type="KEGG" id="mbo:BQ2027_MB2932C"/>
<dbReference type="PATRIC" id="fig|233413.5.peg.3218"/>
<dbReference type="Proteomes" id="UP000001419">
    <property type="component" value="Chromosome"/>
</dbReference>
<dbReference type="GO" id="GO:0005737">
    <property type="term" value="C:cytoplasm"/>
    <property type="evidence" value="ECO:0007669"/>
    <property type="project" value="UniProtKB-SubCell"/>
</dbReference>
<dbReference type="GO" id="GO:0003723">
    <property type="term" value="F:RNA binding"/>
    <property type="evidence" value="ECO:0007669"/>
    <property type="project" value="UniProtKB-UniRule"/>
</dbReference>
<dbReference type="CDD" id="cd22533">
    <property type="entry name" value="KH-II_YlqC-like"/>
    <property type="match status" value="1"/>
</dbReference>
<dbReference type="Gene3D" id="3.30.300.20">
    <property type="match status" value="1"/>
</dbReference>
<dbReference type="HAMAP" id="MF_00088">
    <property type="entry name" value="KhpA"/>
    <property type="match status" value="1"/>
</dbReference>
<dbReference type="InterPro" id="IPR015946">
    <property type="entry name" value="KH_dom-like_a/b"/>
</dbReference>
<dbReference type="InterPro" id="IPR009019">
    <property type="entry name" value="KH_sf_prok-type"/>
</dbReference>
<dbReference type="InterPro" id="IPR020627">
    <property type="entry name" value="KhpA"/>
</dbReference>
<dbReference type="NCBIfam" id="NF002761">
    <property type="entry name" value="PRK02821.1"/>
    <property type="match status" value="1"/>
</dbReference>
<dbReference type="PANTHER" id="PTHR34654:SF1">
    <property type="entry name" value="RNA-BINDING PROTEIN KHPA"/>
    <property type="match status" value="1"/>
</dbReference>
<dbReference type="PANTHER" id="PTHR34654">
    <property type="entry name" value="UPF0109 PROTEIN SCO5592"/>
    <property type="match status" value="1"/>
</dbReference>
<dbReference type="Pfam" id="PF13083">
    <property type="entry name" value="KH_KhpA-B"/>
    <property type="match status" value="1"/>
</dbReference>
<dbReference type="SUPFAM" id="SSF54814">
    <property type="entry name" value="Prokaryotic type KH domain (KH-domain type II)"/>
    <property type="match status" value="1"/>
</dbReference>
<dbReference type="PROSITE" id="PS50084">
    <property type="entry name" value="KH_TYPE_1"/>
    <property type="match status" value="1"/>
</dbReference>
<comment type="function">
    <text evidence="1">A probable RNA-binding protein.</text>
</comment>
<comment type="subcellular location">
    <subcellularLocation>
        <location evidence="1">Cytoplasm</location>
    </subcellularLocation>
</comment>
<comment type="similarity">
    <text evidence="1">Belongs to the KhpA RNA-binding protein family.</text>
</comment>
<evidence type="ECO:0000255" key="1">
    <source>
        <dbReference type="HAMAP-Rule" id="MF_00088"/>
    </source>
</evidence>
<keyword id="KW-0963">Cytoplasm</keyword>
<keyword id="KW-1185">Reference proteome</keyword>
<keyword id="KW-0694">RNA-binding</keyword>
<protein>
    <recommendedName>
        <fullName evidence="1">RNA-binding protein KhpA</fullName>
    </recommendedName>
    <alternativeName>
        <fullName evidence="1">KH-domain protein A</fullName>
    </alternativeName>
</protein>
<name>KHPA_MYCBO</name>
<gene>
    <name evidence="1" type="primary">khpA</name>
    <name type="ordered locus">BQ2027_MB2932C</name>
</gene>
<proteinExistence type="inferred from homology"/>